<protein>
    <recommendedName>
        <fullName evidence="1">Aspartyl/glutamyl-tRNA(Asn/Gln) amidotransferase subunit C</fullName>
        <shortName evidence="1">Asp/Glu-ADT subunit C</shortName>
        <ecNumber evidence="1">6.3.5.-</ecNumber>
    </recommendedName>
</protein>
<sequence length="100" mass="10805">MSDISRDEVAHLAKLSRLALSEEELKQFAAQIDEIVDSVSAVGKVEAEGVEPMSHPHSVHAPMREDVVVRTLTAEQALDQAPAADDDRFMVPQILGGGDE</sequence>
<accession>C3PFU9</accession>
<keyword id="KW-0067">ATP-binding</keyword>
<keyword id="KW-0436">Ligase</keyword>
<keyword id="KW-0547">Nucleotide-binding</keyword>
<keyword id="KW-0648">Protein biosynthesis</keyword>
<keyword id="KW-1185">Reference proteome</keyword>
<name>GATC_CORA7</name>
<dbReference type="EC" id="6.3.5.-" evidence="1"/>
<dbReference type="EMBL" id="CP001601">
    <property type="protein sequence ID" value="ACP32703.1"/>
    <property type="molecule type" value="Genomic_DNA"/>
</dbReference>
<dbReference type="RefSeq" id="WP_010186986.1">
    <property type="nucleotide sequence ID" value="NC_012590.1"/>
</dbReference>
<dbReference type="SMR" id="C3PFU9"/>
<dbReference type="STRING" id="548476.cauri_1110"/>
<dbReference type="GeneID" id="31923730"/>
<dbReference type="KEGG" id="car:cauri_1110"/>
<dbReference type="eggNOG" id="COG0721">
    <property type="taxonomic scope" value="Bacteria"/>
</dbReference>
<dbReference type="HOGENOM" id="CLU_105899_1_0_11"/>
<dbReference type="OrthoDB" id="5295223at2"/>
<dbReference type="Proteomes" id="UP000002077">
    <property type="component" value="Chromosome"/>
</dbReference>
<dbReference type="GO" id="GO:0050566">
    <property type="term" value="F:asparaginyl-tRNA synthase (glutamine-hydrolyzing) activity"/>
    <property type="evidence" value="ECO:0007669"/>
    <property type="project" value="RHEA"/>
</dbReference>
<dbReference type="GO" id="GO:0005524">
    <property type="term" value="F:ATP binding"/>
    <property type="evidence" value="ECO:0007669"/>
    <property type="project" value="UniProtKB-KW"/>
</dbReference>
<dbReference type="GO" id="GO:0050567">
    <property type="term" value="F:glutaminyl-tRNA synthase (glutamine-hydrolyzing) activity"/>
    <property type="evidence" value="ECO:0007669"/>
    <property type="project" value="UniProtKB-UniRule"/>
</dbReference>
<dbReference type="GO" id="GO:0070681">
    <property type="term" value="P:glutaminyl-tRNAGln biosynthesis via transamidation"/>
    <property type="evidence" value="ECO:0007669"/>
    <property type="project" value="TreeGrafter"/>
</dbReference>
<dbReference type="GO" id="GO:0006450">
    <property type="term" value="P:regulation of translational fidelity"/>
    <property type="evidence" value="ECO:0007669"/>
    <property type="project" value="InterPro"/>
</dbReference>
<dbReference type="GO" id="GO:0006412">
    <property type="term" value="P:translation"/>
    <property type="evidence" value="ECO:0007669"/>
    <property type="project" value="UniProtKB-UniRule"/>
</dbReference>
<dbReference type="Gene3D" id="1.10.20.60">
    <property type="entry name" value="Glu-tRNAGln amidotransferase C subunit, N-terminal domain"/>
    <property type="match status" value="1"/>
</dbReference>
<dbReference type="HAMAP" id="MF_00122">
    <property type="entry name" value="GatC"/>
    <property type="match status" value="1"/>
</dbReference>
<dbReference type="InterPro" id="IPR036113">
    <property type="entry name" value="Asp/Glu-ADT_sf_sub_c"/>
</dbReference>
<dbReference type="InterPro" id="IPR003837">
    <property type="entry name" value="GatC"/>
</dbReference>
<dbReference type="NCBIfam" id="TIGR00135">
    <property type="entry name" value="gatC"/>
    <property type="match status" value="1"/>
</dbReference>
<dbReference type="PANTHER" id="PTHR15004">
    <property type="entry name" value="GLUTAMYL-TRNA(GLN) AMIDOTRANSFERASE SUBUNIT C, MITOCHONDRIAL"/>
    <property type="match status" value="1"/>
</dbReference>
<dbReference type="PANTHER" id="PTHR15004:SF0">
    <property type="entry name" value="GLUTAMYL-TRNA(GLN) AMIDOTRANSFERASE SUBUNIT C, MITOCHONDRIAL"/>
    <property type="match status" value="1"/>
</dbReference>
<dbReference type="Pfam" id="PF02686">
    <property type="entry name" value="GatC"/>
    <property type="match status" value="1"/>
</dbReference>
<dbReference type="SUPFAM" id="SSF141000">
    <property type="entry name" value="Glu-tRNAGln amidotransferase C subunit"/>
    <property type="match status" value="1"/>
</dbReference>
<comment type="function">
    <text evidence="1">Allows the formation of correctly charged Asn-tRNA(Asn) or Gln-tRNA(Gln) through the transamidation of misacylated Asp-tRNA(Asn) or Glu-tRNA(Gln) in organisms which lack either or both of asparaginyl-tRNA or glutaminyl-tRNA synthetases. The reaction takes place in the presence of glutamine and ATP through an activated phospho-Asp-tRNA(Asn) or phospho-Glu-tRNA(Gln).</text>
</comment>
<comment type="catalytic activity">
    <reaction evidence="1">
        <text>L-glutamyl-tRNA(Gln) + L-glutamine + ATP + H2O = L-glutaminyl-tRNA(Gln) + L-glutamate + ADP + phosphate + H(+)</text>
        <dbReference type="Rhea" id="RHEA:17521"/>
        <dbReference type="Rhea" id="RHEA-COMP:9681"/>
        <dbReference type="Rhea" id="RHEA-COMP:9684"/>
        <dbReference type="ChEBI" id="CHEBI:15377"/>
        <dbReference type="ChEBI" id="CHEBI:15378"/>
        <dbReference type="ChEBI" id="CHEBI:29985"/>
        <dbReference type="ChEBI" id="CHEBI:30616"/>
        <dbReference type="ChEBI" id="CHEBI:43474"/>
        <dbReference type="ChEBI" id="CHEBI:58359"/>
        <dbReference type="ChEBI" id="CHEBI:78520"/>
        <dbReference type="ChEBI" id="CHEBI:78521"/>
        <dbReference type="ChEBI" id="CHEBI:456216"/>
    </reaction>
</comment>
<comment type="catalytic activity">
    <reaction evidence="1">
        <text>L-aspartyl-tRNA(Asn) + L-glutamine + ATP + H2O = L-asparaginyl-tRNA(Asn) + L-glutamate + ADP + phosphate + 2 H(+)</text>
        <dbReference type="Rhea" id="RHEA:14513"/>
        <dbReference type="Rhea" id="RHEA-COMP:9674"/>
        <dbReference type="Rhea" id="RHEA-COMP:9677"/>
        <dbReference type="ChEBI" id="CHEBI:15377"/>
        <dbReference type="ChEBI" id="CHEBI:15378"/>
        <dbReference type="ChEBI" id="CHEBI:29985"/>
        <dbReference type="ChEBI" id="CHEBI:30616"/>
        <dbReference type="ChEBI" id="CHEBI:43474"/>
        <dbReference type="ChEBI" id="CHEBI:58359"/>
        <dbReference type="ChEBI" id="CHEBI:78515"/>
        <dbReference type="ChEBI" id="CHEBI:78516"/>
        <dbReference type="ChEBI" id="CHEBI:456216"/>
    </reaction>
</comment>
<comment type="subunit">
    <text evidence="1">Heterotrimer of A, B and C subunits.</text>
</comment>
<comment type="similarity">
    <text evidence="1">Belongs to the GatC family.</text>
</comment>
<evidence type="ECO:0000255" key="1">
    <source>
        <dbReference type="HAMAP-Rule" id="MF_00122"/>
    </source>
</evidence>
<reference key="1">
    <citation type="journal article" date="2010" name="BMC Genomics">
        <title>Complete genome sequence and lifestyle of black-pigmented Corynebacterium aurimucosum ATCC 700975 (formerly C. nigricans CN-1) isolated from a vaginal swab of a woman with spontaneous abortion.</title>
        <authorList>
            <person name="Trost E."/>
            <person name="Gotker S."/>
            <person name="Schneider J."/>
            <person name="Schneiker-Bekel S."/>
            <person name="Szczepanowski R."/>
            <person name="Tilker A."/>
            <person name="Viehoever P."/>
            <person name="Arnold W."/>
            <person name="Bekel T."/>
            <person name="Blom J."/>
            <person name="Gartemann K.H."/>
            <person name="Linke B."/>
            <person name="Goesmann A."/>
            <person name="Puhler A."/>
            <person name="Shukla S.K."/>
            <person name="Tauch A."/>
        </authorList>
    </citation>
    <scope>NUCLEOTIDE SEQUENCE [LARGE SCALE GENOMIC DNA]</scope>
    <source>
        <strain>ATCC 700975 / DSM 44827 / CIP 107346 / CN-1</strain>
    </source>
</reference>
<feature type="chain" id="PRO_1000122562" description="Aspartyl/glutamyl-tRNA(Asn/Gln) amidotransferase subunit C">
    <location>
        <begin position="1"/>
        <end position="100"/>
    </location>
</feature>
<organism>
    <name type="scientific">Corynebacterium aurimucosum (strain ATCC 700975 / DSM 44827 / CIP 107346 / CN-1)</name>
    <name type="common">Corynebacterium nigricans</name>
    <dbReference type="NCBI Taxonomy" id="548476"/>
    <lineage>
        <taxon>Bacteria</taxon>
        <taxon>Bacillati</taxon>
        <taxon>Actinomycetota</taxon>
        <taxon>Actinomycetes</taxon>
        <taxon>Mycobacteriales</taxon>
        <taxon>Corynebacteriaceae</taxon>
        <taxon>Corynebacterium</taxon>
    </lineage>
</organism>
<proteinExistence type="inferred from homology"/>
<gene>
    <name evidence="1" type="primary">gatC</name>
    <name type="ordered locus">cauri_1110</name>
</gene>